<gene>
    <name evidence="5" type="primary">poxA</name>
    <name type="ORF">PDE_04008</name>
</gene>
<sequence length="567" mass="60410">MPASDRTSETGDVEKVTAAETPKEVPASNAAESTALTGLPLYTVLVGLGLALFLGAMDMAMLGTAVPSITSTFHTTADIGWYGAAYPLTMSSIQLLAGKIYAQFPQKLVFLVFFGLFMLGSLLCGVAVNSPMFIVGRATAGAGAAGVLSGTLAIVSAVVPLDKQSLILGLMMSLVGTAVVLGPVISGLLTDHSTWRWCFYLNLPCGGVTLLALILFFRPPKRPTRTTPLSIPELIKKLDLAGCLGFIPAVVMLLLALQWGGDGSKEHAWNSATIIGLFCGAGVSLILFLIWEHYQGDDAMLPLKFFRDLTIIASCLYGFALLGGYVVVGYFLPEWFQIIKGANPQSSAVMLLPNVITNFISKAVIGVIVNKTGYFNPWLFFGAAVLAIGSGLETNFHPSTPRPNWIGYQILQGAALGIIQAPTLGVQVALAKQKHLIPVALSLVIFFQYFGSSIMLSISLTIFQNLLRPGLVSKAGMTEAQVQQYVAAGNSEVRELTAQIDPSRLGVVLEVYNDAIAGVMWLSTAAALFGFLVSFGFPWKSLKAQTEENKKEAAEEEEEVKVAAVEA</sequence>
<accession>S7ZK48</accession>
<dbReference type="EMBL" id="KB644411">
    <property type="protein sequence ID" value="EPS29061.1"/>
    <property type="molecule type" value="Genomic_DNA"/>
</dbReference>
<dbReference type="SMR" id="S7ZK48"/>
<dbReference type="STRING" id="933388.S7ZK48"/>
<dbReference type="GlyCosmos" id="S7ZK48">
    <property type="glycosylation" value="1 site, No reported glycans"/>
</dbReference>
<dbReference type="eggNOG" id="KOG0254">
    <property type="taxonomic scope" value="Eukaryota"/>
</dbReference>
<dbReference type="HOGENOM" id="CLU_000960_22_1_1"/>
<dbReference type="OrthoDB" id="10021397at2759"/>
<dbReference type="PhylomeDB" id="S7ZK48"/>
<dbReference type="Proteomes" id="UP000019376">
    <property type="component" value="Unassembled WGS sequence"/>
</dbReference>
<dbReference type="GO" id="GO:0005886">
    <property type="term" value="C:plasma membrane"/>
    <property type="evidence" value="ECO:0007669"/>
    <property type="project" value="UniProtKB-SubCell"/>
</dbReference>
<dbReference type="GO" id="GO:0022857">
    <property type="term" value="F:transmembrane transporter activity"/>
    <property type="evidence" value="ECO:0007669"/>
    <property type="project" value="InterPro"/>
</dbReference>
<dbReference type="Gene3D" id="1.20.1250.20">
    <property type="entry name" value="MFS general substrate transporter like domains"/>
    <property type="match status" value="1"/>
</dbReference>
<dbReference type="InterPro" id="IPR011701">
    <property type="entry name" value="MFS"/>
</dbReference>
<dbReference type="InterPro" id="IPR020846">
    <property type="entry name" value="MFS_dom"/>
</dbReference>
<dbReference type="InterPro" id="IPR036259">
    <property type="entry name" value="MFS_trans_sf"/>
</dbReference>
<dbReference type="PANTHER" id="PTHR23501">
    <property type="entry name" value="MAJOR FACILITATOR SUPERFAMILY"/>
    <property type="match status" value="1"/>
</dbReference>
<dbReference type="PANTHER" id="PTHR23501:SF193">
    <property type="entry name" value="MULTIDRUG TRANSPORTER, PUTATIVE (AFU_ORTHOLOGUE AFUA_8G00940)-RELATED"/>
    <property type="match status" value="1"/>
</dbReference>
<dbReference type="Pfam" id="PF07690">
    <property type="entry name" value="MFS_1"/>
    <property type="match status" value="1"/>
</dbReference>
<dbReference type="SUPFAM" id="SSF103473">
    <property type="entry name" value="MFS general substrate transporter"/>
    <property type="match status" value="1"/>
</dbReference>
<dbReference type="PROSITE" id="PS50850">
    <property type="entry name" value="MFS"/>
    <property type="match status" value="1"/>
</dbReference>
<evidence type="ECO:0000255" key="1"/>
<evidence type="ECO:0000255" key="2">
    <source>
        <dbReference type="PROSITE-ProRule" id="PRU00498"/>
    </source>
</evidence>
<evidence type="ECO:0000256" key="3">
    <source>
        <dbReference type="SAM" id="MobiDB-lite"/>
    </source>
</evidence>
<evidence type="ECO:0000269" key="4">
    <source>
    </source>
</evidence>
<evidence type="ECO:0000303" key="5">
    <source>
    </source>
</evidence>
<evidence type="ECO:0000305" key="6"/>
<evidence type="ECO:0000305" key="7">
    <source>
    </source>
</evidence>
<feature type="chain" id="PRO_0000453768" description="MFS-type transporter poxA">
    <location>
        <begin position="1"/>
        <end position="567"/>
    </location>
</feature>
<feature type="transmembrane region" description="Helical" evidence="1">
    <location>
        <begin position="35"/>
        <end position="55"/>
    </location>
</feature>
<feature type="transmembrane region" description="Helical" evidence="1">
    <location>
        <begin position="77"/>
        <end position="97"/>
    </location>
</feature>
<feature type="transmembrane region" description="Helical" evidence="1">
    <location>
        <begin position="108"/>
        <end position="128"/>
    </location>
</feature>
<feature type="transmembrane region" description="Helical" evidence="1">
    <location>
        <begin position="141"/>
        <end position="161"/>
    </location>
</feature>
<feature type="transmembrane region" description="Helical" evidence="1">
    <location>
        <begin position="165"/>
        <end position="185"/>
    </location>
</feature>
<feature type="transmembrane region" description="Helical" evidence="1">
    <location>
        <begin position="197"/>
        <end position="217"/>
    </location>
</feature>
<feature type="transmembrane region" description="Helical" evidence="1">
    <location>
        <begin position="240"/>
        <end position="260"/>
    </location>
</feature>
<feature type="transmembrane region" description="Helical" evidence="1">
    <location>
        <begin position="271"/>
        <end position="291"/>
    </location>
</feature>
<feature type="transmembrane region" description="Helical" evidence="1">
    <location>
        <begin position="311"/>
        <end position="331"/>
    </location>
</feature>
<feature type="transmembrane region" description="Helical" evidence="1">
    <location>
        <begin position="349"/>
        <end position="369"/>
    </location>
</feature>
<feature type="transmembrane region" description="Helical" evidence="1">
    <location>
        <begin position="372"/>
        <end position="392"/>
    </location>
</feature>
<feature type="transmembrane region" description="Helical" evidence="1">
    <location>
        <begin position="410"/>
        <end position="430"/>
    </location>
</feature>
<feature type="transmembrane region" description="Helical" evidence="1">
    <location>
        <begin position="436"/>
        <end position="456"/>
    </location>
</feature>
<feature type="transmembrane region" description="Helical" evidence="1">
    <location>
        <begin position="515"/>
        <end position="535"/>
    </location>
</feature>
<feature type="region of interest" description="Disordered" evidence="3">
    <location>
        <begin position="1"/>
        <end position="24"/>
    </location>
</feature>
<feature type="region of interest" description="Disordered" evidence="3">
    <location>
        <begin position="547"/>
        <end position="567"/>
    </location>
</feature>
<feature type="compositionally biased region" description="Basic and acidic residues" evidence="3">
    <location>
        <begin position="1"/>
        <end position="23"/>
    </location>
</feature>
<feature type="glycosylation site" description="N-linked (GlcNAc...) asparagine" evidence="2">
    <location>
        <position position="370"/>
    </location>
</feature>
<reference key="1">
    <citation type="journal article" date="2013" name="PLoS ONE">
        <title>Genomic and secretomic analyses reveal unique features of the lignocellulolytic enzyme system of Penicillium decumbens.</title>
        <authorList>
            <person name="Liu G."/>
            <person name="Zhang L."/>
            <person name="Wei X."/>
            <person name="Zou G."/>
            <person name="Qin Y."/>
            <person name="Ma L."/>
            <person name="Li J."/>
            <person name="Zheng H."/>
            <person name="Wang S."/>
            <person name="Wang C."/>
            <person name="Xun L."/>
            <person name="Zhao G.-P."/>
            <person name="Zhou Z."/>
            <person name="Qu Y."/>
        </authorList>
    </citation>
    <scope>NUCLEOTIDE SEQUENCE [LARGE SCALE GENOMIC DNA]</scope>
    <source>
        <strain>114-2 / CGMCC 5302</strain>
    </source>
</reference>
<reference key="2">
    <citation type="journal article" date="2017" name="J. Am. Chem. Soc.">
        <title>Collaborative Biosynthesis of Maleimide- and Succinimide-Containing Natural Products by Fungal Polyketide Megasynthases.</title>
        <authorList>
            <person name="Sato M."/>
            <person name="Dander J.E."/>
            <person name="Sato C."/>
            <person name="Hung Y.S."/>
            <person name="Gao S.S."/>
            <person name="Tang M.C."/>
            <person name="Hang L."/>
            <person name="Winter J.M."/>
            <person name="Garg N.K."/>
            <person name="Watanabe K."/>
            <person name="Tang Y."/>
        </authorList>
    </citation>
    <scope>FUNCTION</scope>
    <scope>INDUCTION</scope>
</reference>
<reference key="3">
    <citation type="journal article" date="2020" name="Chem. Commun. (Camb.)">
        <title>Evidence for enzyme catalysed intramolecular [4+2] Diels-Alder cyclization during the biosynthesis of pyrichalasin H.</title>
        <authorList>
            <person name="Hantke V."/>
            <person name="Skellam E.J."/>
            <person name="Cox R.J."/>
        </authorList>
    </citation>
    <scope>FUNCTION</scope>
</reference>
<organism>
    <name type="scientific">Penicillium oxalicum (strain 114-2 / CGMCC 5302)</name>
    <name type="common">Penicillium decumbens</name>
    <dbReference type="NCBI Taxonomy" id="933388"/>
    <lineage>
        <taxon>Eukaryota</taxon>
        <taxon>Fungi</taxon>
        <taxon>Dikarya</taxon>
        <taxon>Ascomycota</taxon>
        <taxon>Pezizomycotina</taxon>
        <taxon>Eurotiomycetes</taxon>
        <taxon>Eurotiomycetidae</taxon>
        <taxon>Eurotiales</taxon>
        <taxon>Aspergillaceae</taxon>
        <taxon>Penicillium</taxon>
    </lineage>
</organism>
<proteinExistence type="evidence at transcript level"/>
<comment type="function">
    <text evidence="4">MFS-type transporter; part of the gene cluster that mediates the biosynthesis of oxaleimides, cytotoxic compounds containing an unusual disubstituted succinimide moiety.</text>
</comment>
<comment type="subcellular location">
    <subcellularLocation>
        <location evidence="7">Cell membrane</location>
        <topology evidence="1">Multi-pass membrane protein</topology>
    </subcellularLocation>
</comment>
<comment type="induction">
    <text evidence="4">Expression is positively regulated by the oxaleimides biosynthesis cluster-specific transcription factor poxB.</text>
</comment>
<comment type="similarity">
    <text evidence="6">Belongs to the major facilitator superfamily. TCR/Tet family.</text>
</comment>
<protein>
    <recommendedName>
        <fullName evidence="5">MFS-type transporter poxA</fullName>
    </recommendedName>
    <alternativeName>
        <fullName evidence="5">Oxaleimides biosynthesis cluster protein A</fullName>
    </alternativeName>
</protein>
<keyword id="KW-1003">Cell membrane</keyword>
<keyword id="KW-0325">Glycoprotein</keyword>
<keyword id="KW-0472">Membrane</keyword>
<keyword id="KW-1185">Reference proteome</keyword>
<keyword id="KW-0812">Transmembrane</keyword>
<keyword id="KW-1133">Transmembrane helix</keyword>
<keyword id="KW-0813">Transport</keyword>
<name>POXA_PENO1</name>